<protein>
    <recommendedName>
        <fullName>ATP synthase subunit beta, plastid</fullName>
        <ecNumber>7.1.2.2</ecNumber>
    </recommendedName>
    <alternativeName>
        <fullName>ATP synthase F1 sector subunit beta</fullName>
    </alternativeName>
    <alternativeName>
        <fullName>F-ATPase subunit beta</fullName>
    </alternativeName>
</protein>
<keyword id="KW-0066">ATP synthesis</keyword>
<keyword id="KW-0067">ATP-binding</keyword>
<keyword id="KW-0139">CF(1)</keyword>
<keyword id="KW-0375">Hydrogen ion transport</keyword>
<keyword id="KW-0406">Ion transport</keyword>
<keyword id="KW-0472">Membrane</keyword>
<keyword id="KW-0547">Nucleotide-binding</keyword>
<keyword id="KW-0934">Plastid</keyword>
<keyword id="KW-1278">Translocase</keyword>
<keyword id="KW-0813">Transport</keyword>
<gene>
    <name type="primary">atpB</name>
</gene>
<evidence type="ECO:0000250" key="1"/>
<evidence type="ECO:0000305" key="2"/>
<geneLocation type="plastid"/>
<reference key="1">
    <citation type="journal article" date="2002" name="Am. J. Bot.">
        <title>Monophyly of the Convolvulaceae and circumscription of their major lineages based on DNA sequences of multiple chloroplast loci.</title>
        <authorList>
            <person name="Stefanovic S."/>
            <person name="Krueger L."/>
            <person name="Olmstead R.G."/>
        </authorList>
        <dbReference type="AGRICOLA" id="IND23320510"/>
    </citation>
    <scope>NUCLEOTIDE SEQUENCE [GENOMIC DNA]</scope>
</reference>
<reference key="2">
    <citation type="journal article" date="2005" name="J. Mol. Evol.">
        <title>Down the slippery slope: plastid genome evolution in Convolvulaceae.</title>
        <authorList>
            <person name="Stefanovic S."/>
            <person name="Olmstead R.G."/>
        </authorList>
    </citation>
    <scope>NUCLEOTIDE SEQUENCE [GENOMIC DNA]</scope>
</reference>
<dbReference type="EC" id="7.1.2.2"/>
<dbReference type="EMBL" id="AY100845">
    <property type="protein sequence ID" value="AAM52199.1"/>
    <property type="molecule type" value="Genomic_DNA"/>
</dbReference>
<dbReference type="EMBL" id="AY936346">
    <property type="protein sequence ID" value="AAY58014.1"/>
    <property type="molecule type" value="Genomic_DNA"/>
</dbReference>
<dbReference type="SMR" id="Q8MBG4"/>
<dbReference type="GO" id="GO:0009535">
    <property type="term" value="C:chloroplast thylakoid membrane"/>
    <property type="evidence" value="ECO:0007669"/>
    <property type="project" value="TreeGrafter"/>
</dbReference>
<dbReference type="GO" id="GO:0005739">
    <property type="term" value="C:mitochondrion"/>
    <property type="evidence" value="ECO:0007669"/>
    <property type="project" value="GOC"/>
</dbReference>
<dbReference type="GO" id="GO:0045259">
    <property type="term" value="C:proton-transporting ATP synthase complex"/>
    <property type="evidence" value="ECO:0007669"/>
    <property type="project" value="UniProtKB-KW"/>
</dbReference>
<dbReference type="GO" id="GO:0005524">
    <property type="term" value="F:ATP binding"/>
    <property type="evidence" value="ECO:0007669"/>
    <property type="project" value="UniProtKB-KW"/>
</dbReference>
<dbReference type="GO" id="GO:0016887">
    <property type="term" value="F:ATP hydrolysis activity"/>
    <property type="evidence" value="ECO:0007669"/>
    <property type="project" value="InterPro"/>
</dbReference>
<dbReference type="GO" id="GO:0046933">
    <property type="term" value="F:proton-transporting ATP synthase activity, rotational mechanism"/>
    <property type="evidence" value="ECO:0007669"/>
    <property type="project" value="InterPro"/>
</dbReference>
<dbReference type="GO" id="GO:0042776">
    <property type="term" value="P:proton motive force-driven mitochondrial ATP synthesis"/>
    <property type="evidence" value="ECO:0007669"/>
    <property type="project" value="TreeGrafter"/>
</dbReference>
<dbReference type="CDD" id="cd18110">
    <property type="entry name" value="ATP-synt_F1_beta_C"/>
    <property type="match status" value="1"/>
</dbReference>
<dbReference type="CDD" id="cd18115">
    <property type="entry name" value="ATP-synt_F1_beta_N"/>
    <property type="match status" value="1"/>
</dbReference>
<dbReference type="CDD" id="cd01133">
    <property type="entry name" value="F1-ATPase_beta_CD"/>
    <property type="match status" value="1"/>
</dbReference>
<dbReference type="FunFam" id="1.10.1140.10:FF:000001">
    <property type="entry name" value="ATP synthase subunit beta"/>
    <property type="match status" value="1"/>
</dbReference>
<dbReference type="FunFam" id="3.40.50.12240:FF:000006">
    <property type="entry name" value="ATP synthase subunit beta"/>
    <property type="match status" value="1"/>
</dbReference>
<dbReference type="FunFam" id="3.40.50.300:FF:000004">
    <property type="entry name" value="ATP synthase subunit beta"/>
    <property type="match status" value="1"/>
</dbReference>
<dbReference type="FunFam" id="2.40.10.170:FF:000002">
    <property type="entry name" value="ATP synthase subunit beta, chloroplastic"/>
    <property type="match status" value="1"/>
</dbReference>
<dbReference type="Gene3D" id="2.40.10.170">
    <property type="match status" value="1"/>
</dbReference>
<dbReference type="Gene3D" id="1.10.1140.10">
    <property type="entry name" value="Bovine Mitochondrial F1-atpase, Atp Synthase Beta Chain, Chain D, domain 3"/>
    <property type="match status" value="1"/>
</dbReference>
<dbReference type="Gene3D" id="3.40.50.300">
    <property type="entry name" value="P-loop containing nucleotide triphosphate hydrolases"/>
    <property type="match status" value="1"/>
</dbReference>
<dbReference type="HAMAP" id="MF_01347">
    <property type="entry name" value="ATP_synth_beta_bact"/>
    <property type="match status" value="1"/>
</dbReference>
<dbReference type="InterPro" id="IPR003593">
    <property type="entry name" value="AAA+_ATPase"/>
</dbReference>
<dbReference type="InterPro" id="IPR055190">
    <property type="entry name" value="ATP-synt_VA_C"/>
</dbReference>
<dbReference type="InterPro" id="IPR005722">
    <property type="entry name" value="ATP_synth_F1_bsu"/>
</dbReference>
<dbReference type="InterPro" id="IPR020003">
    <property type="entry name" value="ATPase_a/bsu_AS"/>
</dbReference>
<dbReference type="InterPro" id="IPR050053">
    <property type="entry name" value="ATPase_alpha/beta_chains"/>
</dbReference>
<dbReference type="InterPro" id="IPR004100">
    <property type="entry name" value="ATPase_F1/V1/A1_a/bsu_N"/>
</dbReference>
<dbReference type="InterPro" id="IPR036121">
    <property type="entry name" value="ATPase_F1/V1/A1_a/bsu_N_sf"/>
</dbReference>
<dbReference type="InterPro" id="IPR000194">
    <property type="entry name" value="ATPase_F1/V1/A1_a/bsu_nucl-bd"/>
</dbReference>
<dbReference type="InterPro" id="IPR024034">
    <property type="entry name" value="ATPase_F1/V1_b/a_C"/>
</dbReference>
<dbReference type="InterPro" id="IPR027417">
    <property type="entry name" value="P-loop_NTPase"/>
</dbReference>
<dbReference type="NCBIfam" id="TIGR01039">
    <property type="entry name" value="atpD"/>
    <property type="match status" value="1"/>
</dbReference>
<dbReference type="PANTHER" id="PTHR15184">
    <property type="entry name" value="ATP SYNTHASE"/>
    <property type="match status" value="1"/>
</dbReference>
<dbReference type="PANTHER" id="PTHR15184:SF71">
    <property type="entry name" value="ATP SYNTHASE SUBUNIT BETA, MITOCHONDRIAL"/>
    <property type="match status" value="1"/>
</dbReference>
<dbReference type="Pfam" id="PF00006">
    <property type="entry name" value="ATP-synt_ab"/>
    <property type="match status" value="1"/>
</dbReference>
<dbReference type="Pfam" id="PF02874">
    <property type="entry name" value="ATP-synt_ab_N"/>
    <property type="match status" value="1"/>
</dbReference>
<dbReference type="Pfam" id="PF22919">
    <property type="entry name" value="ATP-synt_VA_C"/>
    <property type="match status" value="1"/>
</dbReference>
<dbReference type="SMART" id="SM00382">
    <property type="entry name" value="AAA"/>
    <property type="match status" value="1"/>
</dbReference>
<dbReference type="SUPFAM" id="SSF47917">
    <property type="entry name" value="C-terminal domain of alpha and beta subunits of F1 ATP synthase"/>
    <property type="match status" value="1"/>
</dbReference>
<dbReference type="SUPFAM" id="SSF50615">
    <property type="entry name" value="N-terminal domain of alpha and beta subunits of F1 ATP synthase"/>
    <property type="match status" value="1"/>
</dbReference>
<dbReference type="SUPFAM" id="SSF52540">
    <property type="entry name" value="P-loop containing nucleoside triphosphate hydrolases"/>
    <property type="match status" value="1"/>
</dbReference>
<dbReference type="PROSITE" id="PS00152">
    <property type="entry name" value="ATPASE_ALPHA_BETA"/>
    <property type="match status" value="1"/>
</dbReference>
<comment type="function">
    <text evidence="1">Produces ATP from ADP in the presence of a proton gradient across the membrane. The catalytic sites are hosted primarily by the beta subunits (By similarity).</text>
</comment>
<comment type="catalytic activity">
    <reaction>
        <text>ATP + H2O + 4 H(+)(in) = ADP + phosphate + 5 H(+)(out)</text>
        <dbReference type="Rhea" id="RHEA:57720"/>
        <dbReference type="ChEBI" id="CHEBI:15377"/>
        <dbReference type="ChEBI" id="CHEBI:15378"/>
        <dbReference type="ChEBI" id="CHEBI:30616"/>
        <dbReference type="ChEBI" id="CHEBI:43474"/>
        <dbReference type="ChEBI" id="CHEBI:456216"/>
        <dbReference type="EC" id="7.1.2.2"/>
    </reaction>
</comment>
<comment type="subunit">
    <text evidence="1">F-type ATPases have 2 components, CF(1) - the catalytic core - and CF(0) - the membrane proton channel. CF(1) has five subunits: alpha(3), beta(3), gamma(1), delta(1), epsilon(1). CF(0) has four main subunits: a(1), b(1), b'(1) and c(9-12) (By similarity).</text>
</comment>
<comment type="subcellular location">
    <subcellularLocation>
        <location evidence="2">Plastid membrane</location>
        <topology evidence="2">Peripheral membrane protein</topology>
    </subcellularLocation>
</comment>
<comment type="similarity">
    <text evidence="2">Belongs to the ATPase alpha/beta chains family.</text>
</comment>
<comment type="caution">
    <text evidence="2">This organism being probably non-photosynthetic, the role of this protein is uncertain.</text>
</comment>
<proteinExistence type="inferred from homology"/>
<name>ATPB_CUSSA</name>
<organism>
    <name type="scientific">Cuscuta sandwichiana</name>
    <name type="common">Kauna'oa</name>
    <dbReference type="NCBI Taxonomy" id="197374"/>
    <lineage>
        <taxon>Eukaryota</taxon>
        <taxon>Viridiplantae</taxon>
        <taxon>Streptophyta</taxon>
        <taxon>Embryophyta</taxon>
        <taxon>Tracheophyta</taxon>
        <taxon>Spermatophyta</taxon>
        <taxon>Magnoliopsida</taxon>
        <taxon>eudicotyledons</taxon>
        <taxon>Gunneridae</taxon>
        <taxon>Pentapetalae</taxon>
        <taxon>asterids</taxon>
        <taxon>lamiids</taxon>
        <taxon>Solanales</taxon>
        <taxon>Convolvulaceae</taxon>
        <taxon>Cuscuteae</taxon>
        <taxon>Cuscuta</taxon>
        <taxon>Cuscuta subgen. Grammica</taxon>
        <taxon>Cuscuta sect. Cleistogrammica</taxon>
    </lineage>
</organism>
<sequence>MRLTPNYDYEVSSIDKKKRGYIVQIIGPVLDVAFSPGMMPSIYNALVVQGRHKQEPNVTCEVQQLLGNNRVRAVAMSDTDGLMRGMEVIDTGTPISVPVGGSTLGRIFNVLGEPVDQLGPVETNQLSPIHRSAPPFLKLDTRLSIFETGIKVVDLLAPYRRGGKVGLFGGAGVGKTVLIMELINNIAKAYGGVSVFGGVGERTREGNDLYMEMKESGVINQQKLAESKVALVYGQMNEPPGARMRVGLTALTMAEYFRDVNRQDVLLFIDNIFRFVQAGSEVSALLGRMPSAVGYQPTLSTEMGSLQERITSTKEGSITSIQAVYVPADDLTDPAPATTFAHLDATTVLSRSLAAKGIYPAVDPLDSTSMMLQPQIVGEQHYKTAQRVKQTLQRYKELQDIIAILGLDELSDDDRLTVARARKIERFLSQPFFVAEIFTGSPGKYVSLAETIRGCTLILSGEFDDLPEQTFYLVGTIDEVNAKAILEEEKNFTK</sequence>
<accession>Q8MBG4</accession>
<feature type="chain" id="PRO_0000254469" description="ATP synthase subunit beta, plastid">
    <location>
        <begin position="1"/>
        <end position="494"/>
    </location>
</feature>
<feature type="binding site" evidence="1">
    <location>
        <begin position="169"/>
        <end position="176"/>
    </location>
    <ligand>
        <name>ATP</name>
        <dbReference type="ChEBI" id="CHEBI:30616"/>
    </ligand>
</feature>